<name>RPOA_ALBFT</name>
<keyword id="KW-0240">DNA-directed RNA polymerase</keyword>
<keyword id="KW-0548">Nucleotidyltransferase</keyword>
<keyword id="KW-1185">Reference proteome</keyword>
<keyword id="KW-0804">Transcription</keyword>
<keyword id="KW-0808">Transferase</keyword>
<comment type="function">
    <text evidence="1">DNA-dependent RNA polymerase catalyzes the transcription of DNA into RNA using the four ribonucleoside triphosphates as substrates.</text>
</comment>
<comment type="catalytic activity">
    <reaction evidence="1">
        <text>RNA(n) + a ribonucleoside 5'-triphosphate = RNA(n+1) + diphosphate</text>
        <dbReference type="Rhea" id="RHEA:21248"/>
        <dbReference type="Rhea" id="RHEA-COMP:14527"/>
        <dbReference type="Rhea" id="RHEA-COMP:17342"/>
        <dbReference type="ChEBI" id="CHEBI:33019"/>
        <dbReference type="ChEBI" id="CHEBI:61557"/>
        <dbReference type="ChEBI" id="CHEBI:140395"/>
        <dbReference type="EC" id="2.7.7.6"/>
    </reaction>
</comment>
<comment type="subunit">
    <text evidence="1">Homodimer. The RNAP catalytic core consists of 2 alpha, 1 beta, 1 beta' and 1 omega subunit. When a sigma factor is associated with the core the holoenzyme is formed, which can initiate transcription.</text>
</comment>
<comment type="domain">
    <text evidence="1">The N-terminal domain is essential for RNAP assembly and basal transcription, whereas the C-terminal domain is involved in interaction with transcriptional regulators and with upstream promoter elements.</text>
</comment>
<comment type="similarity">
    <text evidence="1">Belongs to the RNA polymerase alpha chain family.</text>
</comment>
<reference key="1">
    <citation type="submission" date="2006-02" db="EMBL/GenBank/DDBJ databases">
        <title>Complete sequence of chromosome of Rhodoferax ferrireducens DSM 15236.</title>
        <authorList>
            <person name="Copeland A."/>
            <person name="Lucas S."/>
            <person name="Lapidus A."/>
            <person name="Barry K."/>
            <person name="Detter J.C."/>
            <person name="Glavina del Rio T."/>
            <person name="Hammon N."/>
            <person name="Israni S."/>
            <person name="Pitluck S."/>
            <person name="Brettin T."/>
            <person name="Bruce D."/>
            <person name="Han C."/>
            <person name="Tapia R."/>
            <person name="Gilna P."/>
            <person name="Kiss H."/>
            <person name="Schmutz J."/>
            <person name="Larimer F."/>
            <person name="Land M."/>
            <person name="Kyrpides N."/>
            <person name="Ivanova N."/>
            <person name="Richardson P."/>
        </authorList>
    </citation>
    <scope>NUCLEOTIDE SEQUENCE [LARGE SCALE GENOMIC DNA]</scope>
    <source>
        <strain>ATCC BAA-621 / DSM 15236 / T118</strain>
    </source>
</reference>
<sequence>MQNSLLKPKAINVEQMGGNRAKVALEPFERGYGHTLGNALRRVLLASMPGYAATEVTIAGVLHEYSSIDGVQEDVVNILLNLKGVVFKLHNRDEVTLSLRKDGEGLVTASDIQTPHDVEIINPDHVIAHLSQGGKLDMQIKVEKGRGYVPGTMRRHGDEPTKSIGRIILDASFSPVKRVSYTVESARVEQRTDLDKLVVDIETNGAISAEDAVRASAKILVEQLAVFAQLEGSELAAFDTPSPRGSTQFDPILLRPVDELELTVRSANCLKAENIYYIGDLIQRTENELLKTPNLGRKSLNEIKEVLASRGLTLGMKLESWPPAALEKR</sequence>
<protein>
    <recommendedName>
        <fullName evidence="1">DNA-directed RNA polymerase subunit alpha</fullName>
        <shortName evidence="1">RNAP subunit alpha</shortName>
        <ecNumber evidence="1">2.7.7.6</ecNumber>
    </recommendedName>
    <alternativeName>
        <fullName evidence="1">RNA polymerase subunit alpha</fullName>
    </alternativeName>
    <alternativeName>
        <fullName evidence="1">Transcriptase subunit alpha</fullName>
    </alternativeName>
</protein>
<feature type="chain" id="PRO_0000264533" description="DNA-directed RNA polymerase subunit alpha">
    <location>
        <begin position="1"/>
        <end position="329"/>
    </location>
</feature>
<feature type="region of interest" description="Alpha N-terminal domain (alpha-NTD)" evidence="1">
    <location>
        <begin position="1"/>
        <end position="231"/>
    </location>
</feature>
<feature type="region of interest" description="Alpha C-terminal domain (alpha-CTD)" evidence="1">
    <location>
        <begin position="249"/>
        <end position="329"/>
    </location>
</feature>
<dbReference type="EC" id="2.7.7.6" evidence="1"/>
<dbReference type="EMBL" id="CP000267">
    <property type="protein sequence ID" value="ABD71904.1"/>
    <property type="molecule type" value="Genomic_DNA"/>
</dbReference>
<dbReference type="RefSeq" id="WP_011466462.1">
    <property type="nucleotide sequence ID" value="NC_007908.1"/>
</dbReference>
<dbReference type="SMR" id="Q21QP9"/>
<dbReference type="STRING" id="338969.Rfer_4217"/>
<dbReference type="KEGG" id="rfr:Rfer_4217"/>
<dbReference type="eggNOG" id="COG0202">
    <property type="taxonomic scope" value="Bacteria"/>
</dbReference>
<dbReference type="HOGENOM" id="CLU_053084_0_0_4"/>
<dbReference type="OrthoDB" id="9805706at2"/>
<dbReference type="Proteomes" id="UP000008332">
    <property type="component" value="Chromosome"/>
</dbReference>
<dbReference type="GO" id="GO:0005737">
    <property type="term" value="C:cytoplasm"/>
    <property type="evidence" value="ECO:0007669"/>
    <property type="project" value="UniProtKB-ARBA"/>
</dbReference>
<dbReference type="GO" id="GO:0000428">
    <property type="term" value="C:DNA-directed RNA polymerase complex"/>
    <property type="evidence" value="ECO:0007669"/>
    <property type="project" value="UniProtKB-KW"/>
</dbReference>
<dbReference type="GO" id="GO:0003677">
    <property type="term" value="F:DNA binding"/>
    <property type="evidence" value="ECO:0007669"/>
    <property type="project" value="UniProtKB-UniRule"/>
</dbReference>
<dbReference type="GO" id="GO:0003899">
    <property type="term" value="F:DNA-directed RNA polymerase activity"/>
    <property type="evidence" value="ECO:0007669"/>
    <property type="project" value="UniProtKB-UniRule"/>
</dbReference>
<dbReference type="GO" id="GO:0046983">
    <property type="term" value="F:protein dimerization activity"/>
    <property type="evidence" value="ECO:0007669"/>
    <property type="project" value="InterPro"/>
</dbReference>
<dbReference type="GO" id="GO:0006351">
    <property type="term" value="P:DNA-templated transcription"/>
    <property type="evidence" value="ECO:0007669"/>
    <property type="project" value="UniProtKB-UniRule"/>
</dbReference>
<dbReference type="CDD" id="cd06928">
    <property type="entry name" value="RNAP_alpha_NTD"/>
    <property type="match status" value="1"/>
</dbReference>
<dbReference type="FunFam" id="1.10.150.20:FF:000001">
    <property type="entry name" value="DNA-directed RNA polymerase subunit alpha"/>
    <property type="match status" value="1"/>
</dbReference>
<dbReference type="FunFam" id="2.170.120.12:FF:000001">
    <property type="entry name" value="DNA-directed RNA polymerase subunit alpha"/>
    <property type="match status" value="1"/>
</dbReference>
<dbReference type="Gene3D" id="1.10.150.20">
    <property type="entry name" value="5' to 3' exonuclease, C-terminal subdomain"/>
    <property type="match status" value="1"/>
</dbReference>
<dbReference type="Gene3D" id="2.170.120.12">
    <property type="entry name" value="DNA-directed RNA polymerase, insert domain"/>
    <property type="match status" value="1"/>
</dbReference>
<dbReference type="Gene3D" id="3.30.1360.10">
    <property type="entry name" value="RNA polymerase, RBP11-like subunit"/>
    <property type="match status" value="1"/>
</dbReference>
<dbReference type="HAMAP" id="MF_00059">
    <property type="entry name" value="RNApol_bact_RpoA"/>
    <property type="match status" value="1"/>
</dbReference>
<dbReference type="InterPro" id="IPR011262">
    <property type="entry name" value="DNA-dir_RNA_pol_insert"/>
</dbReference>
<dbReference type="InterPro" id="IPR011263">
    <property type="entry name" value="DNA-dir_RNA_pol_RpoA/D/Rpb3"/>
</dbReference>
<dbReference type="InterPro" id="IPR011773">
    <property type="entry name" value="DNA-dir_RpoA"/>
</dbReference>
<dbReference type="InterPro" id="IPR036603">
    <property type="entry name" value="RBP11-like"/>
</dbReference>
<dbReference type="InterPro" id="IPR011260">
    <property type="entry name" value="RNAP_asu_C"/>
</dbReference>
<dbReference type="InterPro" id="IPR036643">
    <property type="entry name" value="RNApol_insert_sf"/>
</dbReference>
<dbReference type="NCBIfam" id="NF003513">
    <property type="entry name" value="PRK05182.1-2"/>
    <property type="match status" value="1"/>
</dbReference>
<dbReference type="NCBIfam" id="NF003519">
    <property type="entry name" value="PRK05182.2-5"/>
    <property type="match status" value="1"/>
</dbReference>
<dbReference type="NCBIfam" id="TIGR02027">
    <property type="entry name" value="rpoA"/>
    <property type="match status" value="1"/>
</dbReference>
<dbReference type="Pfam" id="PF01000">
    <property type="entry name" value="RNA_pol_A_bac"/>
    <property type="match status" value="1"/>
</dbReference>
<dbReference type="Pfam" id="PF03118">
    <property type="entry name" value="RNA_pol_A_CTD"/>
    <property type="match status" value="1"/>
</dbReference>
<dbReference type="Pfam" id="PF01193">
    <property type="entry name" value="RNA_pol_L"/>
    <property type="match status" value="1"/>
</dbReference>
<dbReference type="SMART" id="SM00662">
    <property type="entry name" value="RPOLD"/>
    <property type="match status" value="1"/>
</dbReference>
<dbReference type="SUPFAM" id="SSF47789">
    <property type="entry name" value="C-terminal domain of RNA polymerase alpha subunit"/>
    <property type="match status" value="1"/>
</dbReference>
<dbReference type="SUPFAM" id="SSF56553">
    <property type="entry name" value="Insert subdomain of RNA polymerase alpha subunit"/>
    <property type="match status" value="1"/>
</dbReference>
<dbReference type="SUPFAM" id="SSF55257">
    <property type="entry name" value="RBP11-like subunits of RNA polymerase"/>
    <property type="match status" value="1"/>
</dbReference>
<proteinExistence type="inferred from homology"/>
<evidence type="ECO:0000255" key="1">
    <source>
        <dbReference type="HAMAP-Rule" id="MF_00059"/>
    </source>
</evidence>
<accession>Q21QP9</accession>
<gene>
    <name evidence="1" type="primary">rpoA</name>
    <name type="ordered locus">Rfer_4217</name>
</gene>
<organism>
    <name type="scientific">Albidiferax ferrireducens (strain ATCC BAA-621 / DSM 15236 / T118)</name>
    <name type="common">Rhodoferax ferrireducens</name>
    <dbReference type="NCBI Taxonomy" id="338969"/>
    <lineage>
        <taxon>Bacteria</taxon>
        <taxon>Pseudomonadati</taxon>
        <taxon>Pseudomonadota</taxon>
        <taxon>Betaproteobacteria</taxon>
        <taxon>Burkholderiales</taxon>
        <taxon>Comamonadaceae</taxon>
        <taxon>Rhodoferax</taxon>
    </lineage>
</organism>